<name>NUOB_CHLP8</name>
<protein>
    <recommendedName>
        <fullName evidence="1">NADH-quinone oxidoreductase subunit B</fullName>
        <ecNumber evidence="1">7.1.1.-</ecNumber>
    </recommendedName>
    <alternativeName>
        <fullName evidence="1">NADH dehydrogenase I subunit B</fullName>
    </alternativeName>
    <alternativeName>
        <fullName evidence="1">NDH-1 subunit B</fullName>
    </alternativeName>
</protein>
<evidence type="ECO:0000255" key="1">
    <source>
        <dbReference type="HAMAP-Rule" id="MF_01356"/>
    </source>
</evidence>
<proteinExistence type="inferred from homology"/>
<feature type="chain" id="PRO_0000376168" description="NADH-quinone oxidoreductase subunit B">
    <location>
        <begin position="1"/>
        <end position="189"/>
    </location>
</feature>
<feature type="binding site" evidence="1">
    <location>
        <position position="39"/>
    </location>
    <ligand>
        <name>[4Fe-4S] cluster</name>
        <dbReference type="ChEBI" id="CHEBI:49883"/>
    </ligand>
</feature>
<feature type="binding site" evidence="1">
    <location>
        <position position="40"/>
    </location>
    <ligand>
        <name>[4Fe-4S] cluster</name>
        <dbReference type="ChEBI" id="CHEBI:49883"/>
    </ligand>
</feature>
<feature type="binding site" evidence="1">
    <location>
        <position position="104"/>
    </location>
    <ligand>
        <name>[4Fe-4S] cluster</name>
        <dbReference type="ChEBI" id="CHEBI:49883"/>
    </ligand>
</feature>
<feature type="binding site" evidence="1">
    <location>
        <position position="135"/>
    </location>
    <ligand>
        <name>[4Fe-4S] cluster</name>
        <dbReference type="ChEBI" id="CHEBI:49883"/>
    </ligand>
</feature>
<comment type="function">
    <text evidence="1">NDH-1 shuttles electrons from NADH, via FMN and iron-sulfur (Fe-S) centers, to quinones in the respiratory chain. The immediate electron acceptor for the enzyme in this species is believed to be a menaquinone. Couples the redox reaction to proton translocation (for every two electrons transferred, four hydrogen ions are translocated across the cytoplasmic membrane), and thus conserves the redox energy in a proton gradient.</text>
</comment>
<comment type="catalytic activity">
    <reaction evidence="1">
        <text>a quinone + NADH + 5 H(+)(in) = a quinol + NAD(+) + 4 H(+)(out)</text>
        <dbReference type="Rhea" id="RHEA:57888"/>
        <dbReference type="ChEBI" id="CHEBI:15378"/>
        <dbReference type="ChEBI" id="CHEBI:24646"/>
        <dbReference type="ChEBI" id="CHEBI:57540"/>
        <dbReference type="ChEBI" id="CHEBI:57945"/>
        <dbReference type="ChEBI" id="CHEBI:132124"/>
    </reaction>
</comment>
<comment type="cofactor">
    <cofactor evidence="1">
        <name>[4Fe-4S] cluster</name>
        <dbReference type="ChEBI" id="CHEBI:49883"/>
    </cofactor>
    <text evidence="1">Binds 1 [4Fe-4S] cluster.</text>
</comment>
<comment type="subunit">
    <text evidence="1">NDH-1 is composed of 14 different subunits. Subunits NuoB, C, D, E, F, and G constitute the peripheral sector of the complex.</text>
</comment>
<comment type="subcellular location">
    <subcellularLocation>
        <location evidence="1">Cell inner membrane</location>
        <topology evidence="1">Peripheral membrane protein</topology>
        <orientation evidence="1">Cytoplasmic side</orientation>
    </subcellularLocation>
</comment>
<comment type="similarity">
    <text evidence="1">Belongs to the complex I 20 kDa subunit family.</text>
</comment>
<gene>
    <name evidence="1" type="primary">nuoB</name>
    <name type="ordered locus">Cpar_1307</name>
</gene>
<reference key="1">
    <citation type="submission" date="2008-06" db="EMBL/GenBank/DDBJ databases">
        <title>Complete sequence of Chlorobaculum parvum NCIB 8327.</title>
        <authorList>
            <consortium name="US DOE Joint Genome Institute"/>
            <person name="Lucas S."/>
            <person name="Copeland A."/>
            <person name="Lapidus A."/>
            <person name="Glavina del Rio T."/>
            <person name="Dalin E."/>
            <person name="Tice H."/>
            <person name="Bruce D."/>
            <person name="Goodwin L."/>
            <person name="Pitluck S."/>
            <person name="Schmutz J."/>
            <person name="Larimer F."/>
            <person name="Land M."/>
            <person name="Hauser L."/>
            <person name="Kyrpides N."/>
            <person name="Mikhailova N."/>
            <person name="Zhao F."/>
            <person name="Li T."/>
            <person name="Liu Z."/>
            <person name="Overmann J."/>
            <person name="Bryant D.A."/>
            <person name="Richardson P."/>
        </authorList>
    </citation>
    <scope>NUCLEOTIDE SEQUENCE [LARGE SCALE GENOMIC DNA]</scope>
    <source>
        <strain>DSM 263 / NCIMB 8327</strain>
    </source>
</reference>
<keyword id="KW-0004">4Fe-4S</keyword>
<keyword id="KW-0997">Cell inner membrane</keyword>
<keyword id="KW-1003">Cell membrane</keyword>
<keyword id="KW-0408">Iron</keyword>
<keyword id="KW-0411">Iron-sulfur</keyword>
<keyword id="KW-0472">Membrane</keyword>
<keyword id="KW-0479">Metal-binding</keyword>
<keyword id="KW-0520">NAD</keyword>
<keyword id="KW-0874">Quinone</keyword>
<keyword id="KW-1278">Translocase</keyword>
<keyword id="KW-0813">Transport</keyword>
<dbReference type="EC" id="7.1.1.-" evidence="1"/>
<dbReference type="EMBL" id="CP001099">
    <property type="protein sequence ID" value="ACF11710.1"/>
    <property type="molecule type" value="Genomic_DNA"/>
</dbReference>
<dbReference type="RefSeq" id="WP_012502543.1">
    <property type="nucleotide sequence ID" value="NC_011027.1"/>
</dbReference>
<dbReference type="SMR" id="B3QP57"/>
<dbReference type="STRING" id="517417.Cpar_1307"/>
<dbReference type="KEGG" id="cpc:Cpar_1307"/>
<dbReference type="eggNOG" id="COG0377">
    <property type="taxonomic scope" value="Bacteria"/>
</dbReference>
<dbReference type="HOGENOM" id="CLU_055737_7_3_10"/>
<dbReference type="OrthoDB" id="9786737at2"/>
<dbReference type="Proteomes" id="UP000008811">
    <property type="component" value="Chromosome"/>
</dbReference>
<dbReference type="GO" id="GO:0005886">
    <property type="term" value="C:plasma membrane"/>
    <property type="evidence" value="ECO:0007669"/>
    <property type="project" value="UniProtKB-SubCell"/>
</dbReference>
<dbReference type="GO" id="GO:0045271">
    <property type="term" value="C:respiratory chain complex I"/>
    <property type="evidence" value="ECO:0007669"/>
    <property type="project" value="TreeGrafter"/>
</dbReference>
<dbReference type="GO" id="GO:0051539">
    <property type="term" value="F:4 iron, 4 sulfur cluster binding"/>
    <property type="evidence" value="ECO:0007669"/>
    <property type="project" value="UniProtKB-KW"/>
</dbReference>
<dbReference type="GO" id="GO:0005506">
    <property type="term" value="F:iron ion binding"/>
    <property type="evidence" value="ECO:0007669"/>
    <property type="project" value="UniProtKB-UniRule"/>
</dbReference>
<dbReference type="GO" id="GO:0008137">
    <property type="term" value="F:NADH dehydrogenase (ubiquinone) activity"/>
    <property type="evidence" value="ECO:0007669"/>
    <property type="project" value="InterPro"/>
</dbReference>
<dbReference type="GO" id="GO:0050136">
    <property type="term" value="F:NADH:ubiquinone reductase (non-electrogenic) activity"/>
    <property type="evidence" value="ECO:0007669"/>
    <property type="project" value="UniProtKB-UniRule"/>
</dbReference>
<dbReference type="GO" id="GO:0048038">
    <property type="term" value="F:quinone binding"/>
    <property type="evidence" value="ECO:0007669"/>
    <property type="project" value="UniProtKB-KW"/>
</dbReference>
<dbReference type="GO" id="GO:0009060">
    <property type="term" value="P:aerobic respiration"/>
    <property type="evidence" value="ECO:0007669"/>
    <property type="project" value="TreeGrafter"/>
</dbReference>
<dbReference type="GO" id="GO:0015990">
    <property type="term" value="P:electron transport coupled proton transport"/>
    <property type="evidence" value="ECO:0007669"/>
    <property type="project" value="TreeGrafter"/>
</dbReference>
<dbReference type="FunFam" id="3.40.50.12280:FF:000002">
    <property type="entry name" value="NADH-quinone oxidoreductase subunit B"/>
    <property type="match status" value="1"/>
</dbReference>
<dbReference type="Gene3D" id="3.40.50.12280">
    <property type="match status" value="1"/>
</dbReference>
<dbReference type="HAMAP" id="MF_01356">
    <property type="entry name" value="NDH1_NuoB"/>
    <property type="match status" value="1"/>
</dbReference>
<dbReference type="InterPro" id="IPR006137">
    <property type="entry name" value="NADH_UbQ_OxRdtase-like_20kDa"/>
</dbReference>
<dbReference type="InterPro" id="IPR006138">
    <property type="entry name" value="NADH_UQ_OxRdtase_20Kd_su"/>
</dbReference>
<dbReference type="NCBIfam" id="TIGR01957">
    <property type="entry name" value="nuoB_fam"/>
    <property type="match status" value="1"/>
</dbReference>
<dbReference type="NCBIfam" id="NF005012">
    <property type="entry name" value="PRK06411.1"/>
    <property type="match status" value="1"/>
</dbReference>
<dbReference type="NCBIfam" id="NF011388">
    <property type="entry name" value="PRK14813.1"/>
    <property type="match status" value="1"/>
</dbReference>
<dbReference type="PANTHER" id="PTHR11995">
    <property type="entry name" value="NADH DEHYDROGENASE"/>
    <property type="match status" value="1"/>
</dbReference>
<dbReference type="PANTHER" id="PTHR11995:SF33">
    <property type="entry name" value="NADH-QUINONE OXIDOREDUCTASE SUBUNIT B 2"/>
    <property type="match status" value="1"/>
</dbReference>
<dbReference type="Pfam" id="PF01058">
    <property type="entry name" value="Oxidored_q6"/>
    <property type="match status" value="1"/>
</dbReference>
<dbReference type="SUPFAM" id="SSF56770">
    <property type="entry name" value="HydA/Nqo6-like"/>
    <property type="match status" value="1"/>
</dbReference>
<dbReference type="PROSITE" id="PS01150">
    <property type="entry name" value="COMPLEX1_20K"/>
    <property type="match status" value="1"/>
</dbReference>
<sequence>MGLLDAKVSNRNVLVTSVDNVMNWARLSSLWPMGFGLACCAIEMMATNASNYDLERFGIFPRSSPRQSDLMIVAGTVTMKMAERVVTLYEQMPEPRYVLSMGSCSNCGGPYWDHGYHVLKGVDRVIPVDVYVPGCPPRPEALIGGLMKIQELIRMEGLGISREEALKKLAEKSVDAQQVLDQTRKAAIA</sequence>
<accession>B3QP57</accession>
<organism>
    <name type="scientific">Chlorobaculum parvum (strain DSM 263 / NCIMB 8327)</name>
    <name type="common">Chlorobium vibrioforme subsp. thiosulfatophilum</name>
    <dbReference type="NCBI Taxonomy" id="517417"/>
    <lineage>
        <taxon>Bacteria</taxon>
        <taxon>Pseudomonadati</taxon>
        <taxon>Chlorobiota</taxon>
        <taxon>Chlorobiia</taxon>
        <taxon>Chlorobiales</taxon>
        <taxon>Chlorobiaceae</taxon>
        <taxon>Chlorobaculum</taxon>
    </lineage>
</organism>